<feature type="chain" id="PRO_0000333148" description="Na(+)/H(+) antiporter NhaB">
    <location>
        <begin position="1"/>
        <end position="528"/>
    </location>
</feature>
<feature type="transmembrane region" description="Helical" evidence="1">
    <location>
        <begin position="23"/>
        <end position="43"/>
    </location>
</feature>
<feature type="transmembrane region" description="Helical" evidence="1">
    <location>
        <begin position="45"/>
        <end position="65"/>
    </location>
</feature>
<feature type="transmembrane region" description="Helical" evidence="1">
    <location>
        <begin position="90"/>
        <end position="110"/>
    </location>
</feature>
<feature type="transmembrane region" description="Helical" evidence="1">
    <location>
        <begin position="136"/>
        <end position="156"/>
    </location>
</feature>
<feature type="transmembrane region" description="Helical" evidence="1">
    <location>
        <begin position="204"/>
        <end position="224"/>
    </location>
</feature>
<feature type="transmembrane region" description="Helical" evidence="1">
    <location>
        <begin position="242"/>
        <end position="262"/>
    </location>
</feature>
<feature type="transmembrane region" description="Helical" evidence="1">
    <location>
        <begin position="305"/>
        <end position="325"/>
    </location>
</feature>
<feature type="transmembrane region" description="Helical" evidence="1">
    <location>
        <begin position="350"/>
        <end position="370"/>
    </location>
</feature>
<feature type="transmembrane region" description="Helical" evidence="1">
    <location>
        <begin position="392"/>
        <end position="412"/>
    </location>
</feature>
<feature type="transmembrane region" description="Helical" evidence="1">
    <location>
        <begin position="450"/>
        <end position="470"/>
    </location>
</feature>
<feature type="transmembrane region" description="Helical" evidence="1">
    <location>
        <begin position="479"/>
        <end position="499"/>
    </location>
</feature>
<gene>
    <name evidence="1" type="primary">nhaB</name>
    <name type="ordered locus">VIBHAR_02930</name>
</gene>
<protein>
    <recommendedName>
        <fullName evidence="1">Na(+)/H(+) antiporter NhaB</fullName>
    </recommendedName>
    <alternativeName>
        <fullName evidence="1">Sodium/proton antiporter NhaB</fullName>
    </alternativeName>
</protein>
<proteinExistence type="inferred from homology"/>
<reference key="1">
    <citation type="submission" date="2007-08" db="EMBL/GenBank/DDBJ databases">
        <authorList>
            <consortium name="The Vibrio harveyi Genome Sequencing Project"/>
            <person name="Bassler B."/>
            <person name="Clifton S.W."/>
            <person name="Fulton L."/>
            <person name="Delehaunty K."/>
            <person name="Fronick C."/>
            <person name="Harrison M."/>
            <person name="Markivic C."/>
            <person name="Fulton R."/>
            <person name="Tin-Wollam A.-M."/>
            <person name="Shah N."/>
            <person name="Pepin K."/>
            <person name="Nash W."/>
            <person name="Thiruvilangam P."/>
            <person name="Bhonagiri V."/>
            <person name="Waters C."/>
            <person name="Tu K.C."/>
            <person name="Irgon J."/>
            <person name="Wilson R.K."/>
        </authorList>
    </citation>
    <scope>NUCLEOTIDE SEQUENCE [LARGE SCALE GENOMIC DNA]</scope>
    <source>
        <strain>ATCC BAA-1116 / BB120</strain>
    </source>
</reference>
<organism>
    <name type="scientific">Vibrio campbellii (strain ATCC BAA-1116)</name>
    <dbReference type="NCBI Taxonomy" id="2902295"/>
    <lineage>
        <taxon>Bacteria</taxon>
        <taxon>Pseudomonadati</taxon>
        <taxon>Pseudomonadota</taxon>
        <taxon>Gammaproteobacteria</taxon>
        <taxon>Vibrionales</taxon>
        <taxon>Vibrionaceae</taxon>
        <taxon>Vibrio</taxon>
    </lineage>
</organism>
<accession>A7MZT6</accession>
<keyword id="KW-0050">Antiport</keyword>
<keyword id="KW-0997">Cell inner membrane</keyword>
<keyword id="KW-1003">Cell membrane</keyword>
<keyword id="KW-0406">Ion transport</keyword>
<keyword id="KW-0472">Membrane</keyword>
<keyword id="KW-0915">Sodium</keyword>
<keyword id="KW-0739">Sodium transport</keyword>
<keyword id="KW-0812">Transmembrane</keyword>
<keyword id="KW-1133">Transmembrane helix</keyword>
<keyword id="KW-0813">Transport</keyword>
<sequence>MPMSLGNAFIKNFLGKAPDWYKVAIIAFLIINPIVFFLIDPFVAGWLLVAEFIFTLAMALKCYPLQPGGLLAIEAVAIGMTSPAQVKHELVANIEVLLLLVFMVAGIYFMKQLLLFIFTKILLGIRSKTLLSLAFCFAAAFLSAFLDALTVIAVVISVAVGFYSIYHKVASGNPIGDHDHTQDDTITELTRDDLENYRAFLRSLLMHAGVGTALGGVTTMVGEPQNLIIADQAGWFFGEFLIRMAPVTLPVFFCGLITCAIVEKLKICGYGAQLPDNVRQILVDFDREERKTRTNQDVAKLWIQGLIAVWLIAALALHLAAVGLIGLSVIILATSFTGVIEEHSMGKAFEEALPFTALLAVFFAVVAVIIDQELFKPVIDAVLAVEDKSTQLALFYVANGLLSMVSDNVFVGTVYINEVKAALIDGQITREQFDLLAVAINTGTNLPSVATPNGQAAFLFLLTSALAPLIRLSYGRMVIMALPYTIVLAIVGLMGIMFFLEPATAFFYDAGWISPSSGDLAPVVSGGH</sequence>
<evidence type="ECO:0000255" key="1">
    <source>
        <dbReference type="HAMAP-Rule" id="MF_01599"/>
    </source>
</evidence>
<name>NHAB_VIBC1</name>
<dbReference type="EMBL" id="CP000789">
    <property type="protein sequence ID" value="ABU71883.1"/>
    <property type="molecule type" value="Genomic_DNA"/>
</dbReference>
<dbReference type="RefSeq" id="WP_012128471.1">
    <property type="nucleotide sequence ID" value="NC_022269.1"/>
</dbReference>
<dbReference type="SMR" id="A7MZT6"/>
<dbReference type="KEGG" id="vha:VIBHAR_02930"/>
<dbReference type="PATRIC" id="fig|338187.25.peg.3256"/>
<dbReference type="Proteomes" id="UP000008152">
    <property type="component" value="Chromosome I"/>
</dbReference>
<dbReference type="GO" id="GO:0005886">
    <property type="term" value="C:plasma membrane"/>
    <property type="evidence" value="ECO:0007669"/>
    <property type="project" value="UniProtKB-SubCell"/>
</dbReference>
<dbReference type="GO" id="GO:0015385">
    <property type="term" value="F:sodium:proton antiporter activity"/>
    <property type="evidence" value="ECO:0007669"/>
    <property type="project" value="InterPro"/>
</dbReference>
<dbReference type="HAMAP" id="MF_01599">
    <property type="entry name" value="NhaB"/>
    <property type="match status" value="1"/>
</dbReference>
<dbReference type="InterPro" id="IPR004671">
    <property type="entry name" value="Na+/H+_antiporter_NhaB"/>
</dbReference>
<dbReference type="NCBIfam" id="TIGR00774">
    <property type="entry name" value="NhaB"/>
    <property type="match status" value="1"/>
</dbReference>
<dbReference type="NCBIfam" id="NF007093">
    <property type="entry name" value="PRK09547.1"/>
    <property type="match status" value="1"/>
</dbReference>
<dbReference type="PANTHER" id="PTHR43302:SF1">
    <property type="entry name" value="NA(+)_H(+) ANTIPORTER NHAB"/>
    <property type="match status" value="1"/>
</dbReference>
<dbReference type="PANTHER" id="PTHR43302">
    <property type="entry name" value="TRANSPORTER ARSB-RELATED"/>
    <property type="match status" value="1"/>
</dbReference>
<dbReference type="Pfam" id="PF06450">
    <property type="entry name" value="NhaB"/>
    <property type="match status" value="1"/>
</dbReference>
<comment type="function">
    <text evidence="1">Na(+)/H(+) antiporter that extrudes sodium in exchange for external protons.</text>
</comment>
<comment type="catalytic activity">
    <reaction evidence="1">
        <text>2 Na(+)(in) + 3 H(+)(out) = 2 Na(+)(out) + 3 H(+)(in)</text>
        <dbReference type="Rhea" id="RHEA:29247"/>
        <dbReference type="ChEBI" id="CHEBI:15378"/>
        <dbReference type="ChEBI" id="CHEBI:29101"/>
    </reaction>
    <physiologicalReaction direction="left-to-right" evidence="1">
        <dbReference type="Rhea" id="RHEA:29248"/>
    </physiologicalReaction>
</comment>
<comment type="subcellular location">
    <subcellularLocation>
        <location evidence="1">Cell inner membrane</location>
        <topology evidence="1">Multi-pass membrane protein</topology>
    </subcellularLocation>
</comment>
<comment type="similarity">
    <text evidence="1">Belongs to the NhaB Na(+)/H(+) (TC 2.A.34) antiporter family.</text>
</comment>